<feature type="chain" id="PRO_0000147439" description="Universal stress protein Slr1101">
    <location>
        <begin position="1"/>
        <end position="108"/>
    </location>
</feature>
<proteinExistence type="inferred from homology"/>
<gene>
    <name type="ordered locus">slr1101</name>
</gene>
<name>Y1101_SYNY3</name>
<accession>P72745</accession>
<dbReference type="EMBL" id="BA000022">
    <property type="protein sequence ID" value="BAA16760.1"/>
    <property type="molecule type" value="Genomic_DNA"/>
</dbReference>
<dbReference type="PIR" id="S74608">
    <property type="entry name" value="S74608"/>
</dbReference>
<dbReference type="SMR" id="P72745"/>
<dbReference type="STRING" id="1148.gene:10497616"/>
<dbReference type="PaxDb" id="1148-1651833"/>
<dbReference type="EnsemblBacteria" id="BAA16760">
    <property type="protein sequence ID" value="BAA16760"/>
    <property type="gene ID" value="BAA16760"/>
</dbReference>
<dbReference type="KEGG" id="syn:slr1101"/>
<dbReference type="eggNOG" id="COG0589">
    <property type="taxonomic scope" value="Bacteria"/>
</dbReference>
<dbReference type="InParanoid" id="P72745"/>
<dbReference type="PhylomeDB" id="P72745"/>
<dbReference type="Proteomes" id="UP000001425">
    <property type="component" value="Chromosome"/>
</dbReference>
<dbReference type="CDD" id="cd00293">
    <property type="entry name" value="USP-like"/>
    <property type="match status" value="1"/>
</dbReference>
<dbReference type="Gene3D" id="3.40.50.620">
    <property type="entry name" value="HUPs"/>
    <property type="match status" value="1"/>
</dbReference>
<dbReference type="InterPro" id="IPR014729">
    <property type="entry name" value="Rossmann-like_a/b/a_fold"/>
</dbReference>
<dbReference type="InterPro" id="IPR006015">
    <property type="entry name" value="Universal_stress_UspA"/>
</dbReference>
<dbReference type="InterPro" id="IPR006016">
    <property type="entry name" value="UspA"/>
</dbReference>
<dbReference type="PANTHER" id="PTHR31964">
    <property type="entry name" value="ADENINE NUCLEOTIDE ALPHA HYDROLASES-LIKE SUPERFAMILY PROTEIN"/>
    <property type="match status" value="1"/>
</dbReference>
<dbReference type="PANTHER" id="PTHR31964:SF113">
    <property type="entry name" value="USPA DOMAIN-CONTAINING PROTEIN"/>
    <property type="match status" value="1"/>
</dbReference>
<dbReference type="Pfam" id="PF00582">
    <property type="entry name" value="Usp"/>
    <property type="match status" value="1"/>
</dbReference>
<dbReference type="PRINTS" id="PR01438">
    <property type="entry name" value="UNVRSLSTRESS"/>
</dbReference>
<dbReference type="SUPFAM" id="SSF52402">
    <property type="entry name" value="Adenine nucleotide alpha hydrolases-like"/>
    <property type="match status" value="1"/>
</dbReference>
<reference key="1">
    <citation type="journal article" date="1996" name="DNA Res.">
        <title>Sequence analysis of the genome of the unicellular cyanobacterium Synechocystis sp. strain PCC6803. II. Sequence determination of the entire genome and assignment of potential protein-coding regions.</title>
        <authorList>
            <person name="Kaneko T."/>
            <person name="Sato S."/>
            <person name="Kotani H."/>
            <person name="Tanaka A."/>
            <person name="Asamizu E."/>
            <person name="Nakamura Y."/>
            <person name="Miyajima N."/>
            <person name="Hirosawa M."/>
            <person name="Sugiura M."/>
            <person name="Sasamoto S."/>
            <person name="Kimura T."/>
            <person name="Hosouchi T."/>
            <person name="Matsuno A."/>
            <person name="Muraki A."/>
            <person name="Nakazaki N."/>
            <person name="Naruo K."/>
            <person name="Okumura S."/>
            <person name="Shimpo S."/>
            <person name="Takeuchi C."/>
            <person name="Wada T."/>
            <person name="Watanabe A."/>
            <person name="Yamada M."/>
            <person name="Yasuda M."/>
            <person name="Tabata S."/>
        </authorList>
    </citation>
    <scope>NUCLEOTIDE SEQUENCE [LARGE SCALE GENOMIC DNA]</scope>
    <source>
        <strain>ATCC 27184 / PCC 6803 / Kazusa</strain>
    </source>
</reference>
<keyword id="KW-1185">Reference proteome</keyword>
<protein>
    <recommendedName>
        <fullName>Universal stress protein Slr1101</fullName>
        <shortName>USP Slr1101</shortName>
    </recommendedName>
</protein>
<comment type="similarity">
    <text evidence="1">Belongs to the universal stress protein A family.</text>
</comment>
<organism>
    <name type="scientific">Synechocystis sp. (strain ATCC 27184 / PCC 6803 / Kazusa)</name>
    <dbReference type="NCBI Taxonomy" id="1111708"/>
    <lineage>
        <taxon>Bacteria</taxon>
        <taxon>Bacillati</taxon>
        <taxon>Cyanobacteriota</taxon>
        <taxon>Cyanophyceae</taxon>
        <taxon>Synechococcales</taxon>
        <taxon>Merismopediaceae</taxon>
        <taxon>Synechocystis</taxon>
    </lineage>
</organism>
<sequence length="108" mass="12235">MDEIYPAVGNELTMEVWQQQWQTFEQEGLDTLEKRRQQALALDIECQAEQILGSPGKIICQRAKQDNSDIIVVGHRGRWGLSEILLGSVGNYVFHHAHCCVFVVPTPD</sequence>
<evidence type="ECO:0000305" key="1"/>